<protein>
    <recommendedName>
        <fullName evidence="1">Small ribosomal subunit protein bS18</fullName>
    </recommendedName>
    <alternativeName>
        <fullName evidence="2">30S ribosomal protein S18</fullName>
    </alternativeName>
</protein>
<reference key="1">
    <citation type="submission" date="2007-03" db="EMBL/GenBank/DDBJ databases">
        <authorList>
            <person name="Heidelberg J."/>
        </authorList>
    </citation>
    <scope>NUCLEOTIDE SEQUENCE [LARGE SCALE GENOMIC DNA]</scope>
    <source>
        <strain>ATCC 39541 / Classical Ogawa 395 / O395</strain>
    </source>
</reference>
<reference key="2">
    <citation type="journal article" date="2008" name="PLoS ONE">
        <title>A recalibrated molecular clock and independent origins for the cholera pandemic clones.</title>
        <authorList>
            <person name="Feng L."/>
            <person name="Reeves P.R."/>
            <person name="Lan R."/>
            <person name="Ren Y."/>
            <person name="Gao C."/>
            <person name="Zhou Z."/>
            <person name="Ren Y."/>
            <person name="Cheng J."/>
            <person name="Wang W."/>
            <person name="Wang J."/>
            <person name="Qian W."/>
            <person name="Li D."/>
            <person name="Wang L."/>
        </authorList>
    </citation>
    <scope>NUCLEOTIDE SEQUENCE [LARGE SCALE GENOMIC DNA]</scope>
    <source>
        <strain>ATCC 39541 / Classical Ogawa 395 / O395</strain>
    </source>
</reference>
<sequence length="75" mass="8827">MARFFRRRKFCRFTAEGVQEIDYKDVATLKNYITEAGKIVPSRITGTSAKYQRQLARAIKRARYLALLPYTDKHQ</sequence>
<name>RS18_VIBC3</name>
<organism>
    <name type="scientific">Vibrio cholerae serotype O1 (strain ATCC 39541 / Classical Ogawa 395 / O395)</name>
    <dbReference type="NCBI Taxonomy" id="345073"/>
    <lineage>
        <taxon>Bacteria</taxon>
        <taxon>Pseudomonadati</taxon>
        <taxon>Pseudomonadota</taxon>
        <taxon>Gammaproteobacteria</taxon>
        <taxon>Vibrionales</taxon>
        <taxon>Vibrionaceae</taxon>
        <taxon>Vibrio</taxon>
    </lineage>
</organism>
<feature type="chain" id="PRO_1000071902" description="Small ribosomal subunit protein bS18">
    <location>
        <begin position="1"/>
        <end position="75"/>
    </location>
</feature>
<dbReference type="EMBL" id="CP000627">
    <property type="protein sequence ID" value="ABQ22194.1"/>
    <property type="molecule type" value="Genomic_DNA"/>
</dbReference>
<dbReference type="EMBL" id="CP001235">
    <property type="protein sequence ID" value="ACP08434.1"/>
    <property type="molecule type" value="Genomic_DNA"/>
</dbReference>
<dbReference type="RefSeq" id="WP_000090471.1">
    <property type="nucleotide sequence ID" value="NZ_JAACZH010000040.1"/>
</dbReference>
<dbReference type="SMR" id="A5F3K5"/>
<dbReference type="GeneID" id="97542797"/>
<dbReference type="KEGG" id="vco:VC0395_A2779"/>
<dbReference type="KEGG" id="vcr:VC395_0411"/>
<dbReference type="PATRIC" id="fig|345073.21.peg.399"/>
<dbReference type="eggNOG" id="COG0238">
    <property type="taxonomic scope" value="Bacteria"/>
</dbReference>
<dbReference type="HOGENOM" id="CLU_148710_2_3_6"/>
<dbReference type="OrthoDB" id="9812008at2"/>
<dbReference type="Proteomes" id="UP000000249">
    <property type="component" value="Chromosome 2"/>
</dbReference>
<dbReference type="GO" id="GO:0022627">
    <property type="term" value="C:cytosolic small ribosomal subunit"/>
    <property type="evidence" value="ECO:0007669"/>
    <property type="project" value="TreeGrafter"/>
</dbReference>
<dbReference type="GO" id="GO:0070181">
    <property type="term" value="F:small ribosomal subunit rRNA binding"/>
    <property type="evidence" value="ECO:0007669"/>
    <property type="project" value="TreeGrafter"/>
</dbReference>
<dbReference type="GO" id="GO:0003735">
    <property type="term" value="F:structural constituent of ribosome"/>
    <property type="evidence" value="ECO:0007669"/>
    <property type="project" value="InterPro"/>
</dbReference>
<dbReference type="GO" id="GO:0006412">
    <property type="term" value="P:translation"/>
    <property type="evidence" value="ECO:0007669"/>
    <property type="project" value="UniProtKB-UniRule"/>
</dbReference>
<dbReference type="FunFam" id="4.10.640.10:FF:000001">
    <property type="entry name" value="30S ribosomal protein S18"/>
    <property type="match status" value="1"/>
</dbReference>
<dbReference type="Gene3D" id="4.10.640.10">
    <property type="entry name" value="Ribosomal protein S18"/>
    <property type="match status" value="1"/>
</dbReference>
<dbReference type="HAMAP" id="MF_00270">
    <property type="entry name" value="Ribosomal_bS18"/>
    <property type="match status" value="1"/>
</dbReference>
<dbReference type="InterPro" id="IPR001648">
    <property type="entry name" value="Ribosomal_bS18"/>
</dbReference>
<dbReference type="InterPro" id="IPR018275">
    <property type="entry name" value="Ribosomal_bS18_CS"/>
</dbReference>
<dbReference type="InterPro" id="IPR036870">
    <property type="entry name" value="Ribosomal_bS18_sf"/>
</dbReference>
<dbReference type="NCBIfam" id="TIGR00165">
    <property type="entry name" value="S18"/>
    <property type="match status" value="1"/>
</dbReference>
<dbReference type="PANTHER" id="PTHR13479">
    <property type="entry name" value="30S RIBOSOMAL PROTEIN S18"/>
    <property type="match status" value="1"/>
</dbReference>
<dbReference type="PANTHER" id="PTHR13479:SF40">
    <property type="entry name" value="SMALL RIBOSOMAL SUBUNIT PROTEIN BS18M"/>
    <property type="match status" value="1"/>
</dbReference>
<dbReference type="Pfam" id="PF01084">
    <property type="entry name" value="Ribosomal_S18"/>
    <property type="match status" value="1"/>
</dbReference>
<dbReference type="PRINTS" id="PR00974">
    <property type="entry name" value="RIBOSOMALS18"/>
</dbReference>
<dbReference type="SUPFAM" id="SSF46911">
    <property type="entry name" value="Ribosomal protein S18"/>
    <property type="match status" value="1"/>
</dbReference>
<dbReference type="PROSITE" id="PS00057">
    <property type="entry name" value="RIBOSOMAL_S18"/>
    <property type="match status" value="1"/>
</dbReference>
<gene>
    <name evidence="1" type="primary">rpsR</name>
    <name type="ordered locus">VC0395_A2779</name>
    <name type="ordered locus">VC395_0411</name>
</gene>
<keyword id="KW-0687">Ribonucleoprotein</keyword>
<keyword id="KW-0689">Ribosomal protein</keyword>
<keyword id="KW-0694">RNA-binding</keyword>
<keyword id="KW-0699">rRNA-binding</keyword>
<proteinExistence type="inferred from homology"/>
<comment type="function">
    <text evidence="1">Binds as a heterodimer with protein bS6 to the central domain of the 16S rRNA, where it helps stabilize the platform of the 30S subunit.</text>
</comment>
<comment type="subunit">
    <text evidence="1">Part of the 30S ribosomal subunit. Forms a tight heterodimer with protein bS6.</text>
</comment>
<comment type="similarity">
    <text evidence="1">Belongs to the bacterial ribosomal protein bS18 family.</text>
</comment>
<evidence type="ECO:0000255" key="1">
    <source>
        <dbReference type="HAMAP-Rule" id="MF_00270"/>
    </source>
</evidence>
<evidence type="ECO:0000305" key="2"/>
<accession>A5F3K5</accession>
<accession>C3M4G2</accession>